<proteinExistence type="inferred from homology"/>
<feature type="chain" id="PRO_0000091573" description="Protein-methionine-sulfoxide reductase heme-binding subunit MsrQ">
    <location>
        <begin position="1"/>
        <end position="202"/>
    </location>
</feature>
<feature type="transmembrane region" description="Helical" evidence="1">
    <location>
        <begin position="8"/>
        <end position="28"/>
    </location>
</feature>
<feature type="transmembrane region" description="Helical" evidence="1">
    <location>
        <begin position="50"/>
        <end position="70"/>
    </location>
</feature>
<feature type="transmembrane region" description="Helical" evidence="1">
    <location>
        <begin position="76"/>
        <end position="96"/>
    </location>
</feature>
<feature type="transmembrane region" description="Helical" evidence="1">
    <location>
        <begin position="114"/>
        <end position="134"/>
    </location>
</feature>
<feature type="transmembrane region" description="Helical" evidence="1">
    <location>
        <begin position="148"/>
        <end position="168"/>
    </location>
</feature>
<feature type="transmembrane region" description="Helical" evidence="1">
    <location>
        <begin position="174"/>
        <end position="194"/>
    </location>
</feature>
<reference key="1">
    <citation type="journal article" date="1999" name="Science">
        <title>Genome sequence of the radioresistant bacterium Deinococcus radiodurans R1.</title>
        <authorList>
            <person name="White O."/>
            <person name="Eisen J.A."/>
            <person name="Heidelberg J.F."/>
            <person name="Hickey E.K."/>
            <person name="Peterson J.D."/>
            <person name="Dodson R.J."/>
            <person name="Haft D.H."/>
            <person name="Gwinn M.L."/>
            <person name="Nelson W.C."/>
            <person name="Richardson D.L."/>
            <person name="Moffat K.S."/>
            <person name="Qin H."/>
            <person name="Jiang L."/>
            <person name="Pamphile W."/>
            <person name="Crosby M."/>
            <person name="Shen M."/>
            <person name="Vamathevan J.J."/>
            <person name="Lam P."/>
            <person name="McDonald L.A."/>
            <person name="Utterback T.R."/>
            <person name="Zalewski C."/>
            <person name="Makarova K.S."/>
            <person name="Aravind L."/>
            <person name="Daly M.J."/>
            <person name="Minton K.W."/>
            <person name="Fleischmann R.D."/>
            <person name="Ketchum K.A."/>
            <person name="Nelson K.E."/>
            <person name="Salzberg S.L."/>
            <person name="Smith H.O."/>
            <person name="Venter J.C."/>
            <person name="Fraser C.M."/>
        </authorList>
    </citation>
    <scope>NUCLEOTIDE SEQUENCE [LARGE SCALE GENOMIC DNA]</scope>
    <source>
        <strain>ATCC 13939 / DSM 20539 / JCM 16871 / CCUG 27074 / LMG 4051 / NBRC 15346 / NCIMB 9279 / VKM B-1422 / R1</strain>
    </source>
</reference>
<name>MSRQ_DEIRA</name>
<organism>
    <name type="scientific">Deinococcus radiodurans (strain ATCC 13939 / DSM 20539 / JCM 16871 / CCUG 27074 / LMG 4051 / NBRC 15346 / NCIMB 9279 / VKM B-1422 / R1)</name>
    <dbReference type="NCBI Taxonomy" id="243230"/>
    <lineage>
        <taxon>Bacteria</taxon>
        <taxon>Thermotogati</taxon>
        <taxon>Deinococcota</taxon>
        <taxon>Deinococci</taxon>
        <taxon>Deinococcales</taxon>
        <taxon>Deinococcaceae</taxon>
        <taxon>Deinococcus</taxon>
    </lineage>
</organism>
<keyword id="KW-1003">Cell membrane</keyword>
<keyword id="KW-0249">Electron transport</keyword>
<keyword id="KW-0285">Flavoprotein</keyword>
<keyword id="KW-0288">FMN</keyword>
<keyword id="KW-0349">Heme</keyword>
<keyword id="KW-0408">Iron</keyword>
<keyword id="KW-0472">Membrane</keyword>
<keyword id="KW-0479">Metal-binding</keyword>
<keyword id="KW-1185">Reference proteome</keyword>
<keyword id="KW-0812">Transmembrane</keyword>
<keyword id="KW-1133">Transmembrane helix</keyword>
<keyword id="KW-0813">Transport</keyword>
<sequence>MARRPPPYAWLGPGVVLGGLLPTVFLLWDALSGGLGANPVKQATHQTGQLALIVLTLSLACTPARVWLGWTWAARIRKALGLLAAFYAVLHFGIYLRGQDFSLGRIWEDVTERPFITSGFAALLLLLPLVLTSGKGSVRRLGFARWTLLHRLVYLAAALGALHYWWGVKKDHSGPLLAVLVLAALGLARLKTPARLNRPARQ</sequence>
<evidence type="ECO:0000255" key="1">
    <source>
        <dbReference type="HAMAP-Rule" id="MF_01207"/>
    </source>
</evidence>
<dbReference type="EMBL" id="AE000513">
    <property type="protein sequence ID" value="AAF12078.1"/>
    <property type="molecule type" value="Genomic_DNA"/>
</dbReference>
<dbReference type="PIR" id="A75261">
    <property type="entry name" value="A75261"/>
</dbReference>
<dbReference type="RefSeq" id="NP_296257.1">
    <property type="nucleotide sequence ID" value="NC_001263.1"/>
</dbReference>
<dbReference type="RefSeq" id="WP_010889162.1">
    <property type="nucleotide sequence ID" value="NC_001263.1"/>
</dbReference>
<dbReference type="SMR" id="Q9RRF5"/>
<dbReference type="STRING" id="243230.DR_2537"/>
<dbReference type="PaxDb" id="243230-DR_2537"/>
<dbReference type="EnsemblBacteria" id="AAF12078">
    <property type="protein sequence ID" value="AAF12078"/>
    <property type="gene ID" value="DR_2537"/>
</dbReference>
<dbReference type="GeneID" id="69518789"/>
<dbReference type="KEGG" id="dra:DR_2537"/>
<dbReference type="PATRIC" id="fig|243230.17.peg.2780"/>
<dbReference type="eggNOG" id="COG2717">
    <property type="taxonomic scope" value="Bacteria"/>
</dbReference>
<dbReference type="HOGENOM" id="CLU_080662_0_1_0"/>
<dbReference type="InParanoid" id="Q9RRF5"/>
<dbReference type="OrthoDB" id="9788328at2"/>
<dbReference type="Proteomes" id="UP000002524">
    <property type="component" value="Chromosome 1"/>
</dbReference>
<dbReference type="GO" id="GO:0005886">
    <property type="term" value="C:plasma membrane"/>
    <property type="evidence" value="ECO:0000318"/>
    <property type="project" value="GO_Central"/>
</dbReference>
<dbReference type="GO" id="GO:0009055">
    <property type="term" value="F:electron transfer activity"/>
    <property type="evidence" value="ECO:0007669"/>
    <property type="project" value="UniProtKB-UniRule"/>
</dbReference>
<dbReference type="GO" id="GO:0010181">
    <property type="term" value="F:FMN binding"/>
    <property type="evidence" value="ECO:0000318"/>
    <property type="project" value="GO_Central"/>
</dbReference>
<dbReference type="GO" id="GO:0020037">
    <property type="term" value="F:heme binding"/>
    <property type="evidence" value="ECO:0000318"/>
    <property type="project" value="GO_Central"/>
</dbReference>
<dbReference type="GO" id="GO:0046872">
    <property type="term" value="F:metal ion binding"/>
    <property type="evidence" value="ECO:0007669"/>
    <property type="project" value="UniProtKB-KW"/>
</dbReference>
<dbReference type="GO" id="GO:0016679">
    <property type="term" value="F:oxidoreductase activity, acting on diphenols and related substances as donors"/>
    <property type="evidence" value="ECO:0000318"/>
    <property type="project" value="GO_Central"/>
</dbReference>
<dbReference type="GO" id="GO:0030091">
    <property type="term" value="P:protein repair"/>
    <property type="evidence" value="ECO:0007669"/>
    <property type="project" value="UniProtKB-UniRule"/>
</dbReference>
<dbReference type="HAMAP" id="MF_01207">
    <property type="entry name" value="MsrQ"/>
    <property type="match status" value="1"/>
</dbReference>
<dbReference type="InterPro" id="IPR013130">
    <property type="entry name" value="Fe3_Rdtase_TM_dom"/>
</dbReference>
<dbReference type="InterPro" id="IPR022837">
    <property type="entry name" value="MsrQ-like"/>
</dbReference>
<dbReference type="PANTHER" id="PTHR36964">
    <property type="entry name" value="PROTEIN-METHIONINE-SULFOXIDE REDUCTASE HEME-BINDING SUBUNIT MSRQ"/>
    <property type="match status" value="1"/>
</dbReference>
<dbReference type="PANTHER" id="PTHR36964:SF1">
    <property type="entry name" value="PROTEIN-METHIONINE-SULFOXIDE REDUCTASE HEME-BINDING SUBUNIT MSRQ"/>
    <property type="match status" value="1"/>
</dbReference>
<dbReference type="Pfam" id="PF01794">
    <property type="entry name" value="Ferric_reduct"/>
    <property type="match status" value="1"/>
</dbReference>
<protein>
    <recommendedName>
        <fullName evidence="1">Protein-methionine-sulfoxide reductase heme-binding subunit MsrQ</fullName>
    </recommendedName>
    <alternativeName>
        <fullName evidence="1">Flavocytochrome MsrQ</fullName>
    </alternativeName>
</protein>
<gene>
    <name evidence="1" type="primary">msrQ</name>
    <name type="ordered locus">DR_2537</name>
</gene>
<comment type="function">
    <text evidence="1">Part of the MsrPQ system that repairs oxidized cell envelope proteins containing methionine sulfoxide residues (Met-O), using respiratory chain electrons. Thus protects these proteins from oxidative-stress damage caused by reactive species of oxygen and chlorine. MsrPQ is essential for the maintenance of envelope integrity under bleach stress, rescuing a wide series of structurally unrelated cell envelope proteins from methionine oxidation. MsrQ provides electrons for reduction to the reductase catalytic subunit MsrP, using the quinone pool of the respiratory chain.</text>
</comment>
<comment type="cofactor">
    <cofactor evidence="1">
        <name>FMN</name>
        <dbReference type="ChEBI" id="CHEBI:58210"/>
    </cofactor>
    <text evidence="1">Binds 1 FMN per subunit.</text>
</comment>
<comment type="cofactor">
    <cofactor evidence="1">
        <name>heme b</name>
        <dbReference type="ChEBI" id="CHEBI:60344"/>
    </cofactor>
    <text evidence="1">Binds 1 heme b (iron(II)-protoporphyrin IX) group per subunit.</text>
</comment>
<comment type="subunit">
    <text evidence="1">Heterodimer of a catalytic subunit (MsrP) and a heme-binding subunit (MsrQ).</text>
</comment>
<comment type="subcellular location">
    <subcellularLocation>
        <location evidence="1">Cell membrane</location>
        <topology evidence="1">Multi-pass membrane protein</topology>
    </subcellularLocation>
</comment>
<comment type="similarity">
    <text evidence="1">Belongs to the MsrQ family.</text>
</comment>
<accession>Q9RRF5</accession>